<comment type="function">
    <text evidence="1">Catalyzes the oxidation of either pyridoxine 5'-phosphate (PNP) or pyridoxamine 5'-phosphate (PMP) into pyridoxal 5'-phosphate (PLP).</text>
</comment>
<comment type="catalytic activity">
    <reaction evidence="1">
        <text>pyridoxamine 5'-phosphate + O2 + H2O = pyridoxal 5'-phosphate + H2O2 + NH4(+)</text>
        <dbReference type="Rhea" id="RHEA:15817"/>
        <dbReference type="ChEBI" id="CHEBI:15377"/>
        <dbReference type="ChEBI" id="CHEBI:15379"/>
        <dbReference type="ChEBI" id="CHEBI:16240"/>
        <dbReference type="ChEBI" id="CHEBI:28938"/>
        <dbReference type="ChEBI" id="CHEBI:58451"/>
        <dbReference type="ChEBI" id="CHEBI:597326"/>
        <dbReference type="EC" id="1.4.3.5"/>
    </reaction>
</comment>
<comment type="catalytic activity">
    <reaction evidence="1">
        <text>pyridoxine 5'-phosphate + O2 = pyridoxal 5'-phosphate + H2O2</text>
        <dbReference type="Rhea" id="RHEA:15149"/>
        <dbReference type="ChEBI" id="CHEBI:15379"/>
        <dbReference type="ChEBI" id="CHEBI:16240"/>
        <dbReference type="ChEBI" id="CHEBI:58589"/>
        <dbReference type="ChEBI" id="CHEBI:597326"/>
        <dbReference type="EC" id="1.4.3.5"/>
    </reaction>
</comment>
<comment type="cofactor">
    <cofactor evidence="1">
        <name>FMN</name>
        <dbReference type="ChEBI" id="CHEBI:58210"/>
    </cofactor>
    <text evidence="1">Binds 1 FMN per subunit.</text>
</comment>
<comment type="pathway">
    <text evidence="1">Cofactor metabolism; pyridoxal 5'-phosphate salvage; pyridoxal 5'-phosphate from pyridoxamine 5'-phosphate: step 1/1.</text>
</comment>
<comment type="pathway">
    <text evidence="1">Cofactor metabolism; pyridoxal 5'-phosphate salvage; pyridoxal 5'-phosphate from pyridoxine 5'-phosphate: step 1/1.</text>
</comment>
<comment type="subunit">
    <text evidence="1">Homodimer.</text>
</comment>
<comment type="similarity">
    <text evidence="1">Belongs to the pyridoxamine 5'-phosphate oxidase family.</text>
</comment>
<reference key="1">
    <citation type="journal article" date="2002" name="Nature">
        <title>Genome sequence of the plant pathogen Ralstonia solanacearum.</title>
        <authorList>
            <person name="Salanoubat M."/>
            <person name="Genin S."/>
            <person name="Artiguenave F."/>
            <person name="Gouzy J."/>
            <person name="Mangenot S."/>
            <person name="Arlat M."/>
            <person name="Billault A."/>
            <person name="Brottier P."/>
            <person name="Camus J.-C."/>
            <person name="Cattolico L."/>
            <person name="Chandler M."/>
            <person name="Choisne N."/>
            <person name="Claudel-Renard C."/>
            <person name="Cunnac S."/>
            <person name="Demange N."/>
            <person name="Gaspin C."/>
            <person name="Lavie M."/>
            <person name="Moisan A."/>
            <person name="Robert C."/>
            <person name="Saurin W."/>
            <person name="Schiex T."/>
            <person name="Siguier P."/>
            <person name="Thebault P."/>
            <person name="Whalen M."/>
            <person name="Wincker P."/>
            <person name="Levy M."/>
            <person name="Weissenbach J."/>
            <person name="Boucher C.A."/>
        </authorList>
    </citation>
    <scope>NUCLEOTIDE SEQUENCE [LARGE SCALE GENOMIC DNA]</scope>
    <source>
        <strain>ATCC BAA-1114 / GMI1000</strain>
    </source>
</reference>
<gene>
    <name evidence="1" type="primary">pdxH1</name>
    <name type="ordered locus">RSc0767</name>
    <name type="ORF">RS05086</name>
</gene>
<accession>Q8Y1C3</accession>
<evidence type="ECO:0000255" key="1">
    <source>
        <dbReference type="HAMAP-Rule" id="MF_01629"/>
    </source>
</evidence>
<organism>
    <name type="scientific">Ralstonia nicotianae (strain ATCC BAA-1114 / GMI1000)</name>
    <name type="common">Ralstonia solanacearum</name>
    <dbReference type="NCBI Taxonomy" id="267608"/>
    <lineage>
        <taxon>Bacteria</taxon>
        <taxon>Pseudomonadati</taxon>
        <taxon>Pseudomonadota</taxon>
        <taxon>Betaproteobacteria</taxon>
        <taxon>Burkholderiales</taxon>
        <taxon>Burkholderiaceae</taxon>
        <taxon>Ralstonia</taxon>
        <taxon>Ralstonia solanacearum species complex</taxon>
    </lineage>
</organism>
<dbReference type="EC" id="1.4.3.5" evidence="1"/>
<dbReference type="EMBL" id="AL646052">
    <property type="protein sequence ID" value="CAD14297.1"/>
    <property type="molecule type" value="Genomic_DNA"/>
</dbReference>
<dbReference type="SMR" id="Q8Y1C3"/>
<dbReference type="STRING" id="267608.RSc0767"/>
<dbReference type="EnsemblBacteria" id="CAD14297">
    <property type="protein sequence ID" value="CAD14297"/>
    <property type="gene ID" value="RSc0767"/>
</dbReference>
<dbReference type="KEGG" id="rso:RSc0767"/>
<dbReference type="eggNOG" id="COG0259">
    <property type="taxonomic scope" value="Bacteria"/>
</dbReference>
<dbReference type="HOGENOM" id="CLU_032263_2_2_4"/>
<dbReference type="UniPathway" id="UPA01068">
    <property type="reaction ID" value="UER00304"/>
</dbReference>
<dbReference type="UniPathway" id="UPA01068">
    <property type="reaction ID" value="UER00305"/>
</dbReference>
<dbReference type="Proteomes" id="UP000001436">
    <property type="component" value="Chromosome"/>
</dbReference>
<dbReference type="GO" id="GO:0010181">
    <property type="term" value="F:FMN binding"/>
    <property type="evidence" value="ECO:0007669"/>
    <property type="project" value="UniProtKB-UniRule"/>
</dbReference>
<dbReference type="GO" id="GO:0004733">
    <property type="term" value="F:pyridoxamine phosphate oxidase activity"/>
    <property type="evidence" value="ECO:0007669"/>
    <property type="project" value="UniProtKB-UniRule"/>
</dbReference>
<dbReference type="GO" id="GO:0008615">
    <property type="term" value="P:pyridoxine biosynthetic process"/>
    <property type="evidence" value="ECO:0007669"/>
    <property type="project" value="UniProtKB-KW"/>
</dbReference>
<dbReference type="FunFam" id="2.30.110.10:FF:000020">
    <property type="entry name" value="PNPO isoform 11"/>
    <property type="match status" value="1"/>
</dbReference>
<dbReference type="Gene3D" id="2.30.110.10">
    <property type="entry name" value="Electron Transport, Fmn-binding Protein, Chain A"/>
    <property type="match status" value="1"/>
</dbReference>
<dbReference type="HAMAP" id="MF_01629">
    <property type="entry name" value="PdxH"/>
    <property type="match status" value="1"/>
</dbReference>
<dbReference type="InterPro" id="IPR000659">
    <property type="entry name" value="Pyridox_Oxase"/>
</dbReference>
<dbReference type="InterPro" id="IPR019740">
    <property type="entry name" value="Pyridox_Oxase_CS"/>
</dbReference>
<dbReference type="InterPro" id="IPR011576">
    <property type="entry name" value="Pyridox_Oxase_N"/>
</dbReference>
<dbReference type="InterPro" id="IPR019576">
    <property type="entry name" value="Pyridoxamine_oxidase_dimer_C"/>
</dbReference>
<dbReference type="InterPro" id="IPR012349">
    <property type="entry name" value="Split_barrel_FMN-bd"/>
</dbReference>
<dbReference type="NCBIfam" id="TIGR00558">
    <property type="entry name" value="pdxH"/>
    <property type="match status" value="1"/>
</dbReference>
<dbReference type="NCBIfam" id="NF004231">
    <property type="entry name" value="PRK05679.1"/>
    <property type="match status" value="1"/>
</dbReference>
<dbReference type="PANTHER" id="PTHR10851:SF0">
    <property type="entry name" value="PYRIDOXINE-5'-PHOSPHATE OXIDASE"/>
    <property type="match status" value="1"/>
</dbReference>
<dbReference type="PANTHER" id="PTHR10851">
    <property type="entry name" value="PYRIDOXINE-5-PHOSPHATE OXIDASE"/>
    <property type="match status" value="1"/>
</dbReference>
<dbReference type="Pfam" id="PF10590">
    <property type="entry name" value="PNP_phzG_C"/>
    <property type="match status" value="1"/>
</dbReference>
<dbReference type="Pfam" id="PF01243">
    <property type="entry name" value="PNPOx_N"/>
    <property type="match status" value="1"/>
</dbReference>
<dbReference type="PIRSF" id="PIRSF000190">
    <property type="entry name" value="Pyd_amn-ph_oxd"/>
    <property type="match status" value="1"/>
</dbReference>
<dbReference type="SUPFAM" id="SSF50475">
    <property type="entry name" value="FMN-binding split barrel"/>
    <property type="match status" value="1"/>
</dbReference>
<dbReference type="PROSITE" id="PS01064">
    <property type="entry name" value="PYRIDOX_OXIDASE"/>
    <property type="match status" value="1"/>
</dbReference>
<sequence length="212" mass="24330">MTSIADIRTDYARASLDIADVDPNPLRQFRRWFDEAIRAEVAEVNAMTLATVDPQGQPSARIVLLKNLDERGFTFFTNYCSHKGEELAANPHAALLFHWIGLERQVRVQGVVEKVSEAESDAYYHSRPLGSRLGAWASEQSSEVPDRAVLEAREAEYRERFGDAPPRPPHWGGYRLLPERIEFWQGRPSRLHDRLEYRRQPDGGWHIVRLAP</sequence>
<name>PDXH1_RALN1</name>
<feature type="chain" id="PRO_0000167744" description="Pyridoxine/pyridoxamine 5'-phosphate oxidase 1">
    <location>
        <begin position="1"/>
        <end position="212"/>
    </location>
</feature>
<feature type="binding site" evidence="1">
    <location>
        <begin position="8"/>
        <end position="11"/>
    </location>
    <ligand>
        <name>substrate</name>
    </ligand>
</feature>
<feature type="binding site" evidence="1">
    <location>
        <begin position="61"/>
        <end position="66"/>
    </location>
    <ligand>
        <name>FMN</name>
        <dbReference type="ChEBI" id="CHEBI:58210"/>
    </ligand>
</feature>
<feature type="binding site" evidence="1">
    <location>
        <position position="66"/>
    </location>
    <ligand>
        <name>substrate</name>
    </ligand>
</feature>
<feature type="binding site" evidence="1">
    <location>
        <begin position="76"/>
        <end position="77"/>
    </location>
    <ligand>
        <name>FMN</name>
        <dbReference type="ChEBI" id="CHEBI:58210"/>
    </ligand>
</feature>
<feature type="binding site" evidence="1">
    <location>
        <position position="83"/>
    </location>
    <ligand>
        <name>FMN</name>
        <dbReference type="ChEBI" id="CHEBI:58210"/>
    </ligand>
</feature>
<feature type="binding site" evidence="1">
    <location>
        <position position="105"/>
    </location>
    <ligand>
        <name>FMN</name>
        <dbReference type="ChEBI" id="CHEBI:58210"/>
    </ligand>
</feature>
<feature type="binding site" evidence="1">
    <location>
        <position position="123"/>
    </location>
    <ligand>
        <name>substrate</name>
    </ligand>
</feature>
<feature type="binding site" evidence="1">
    <location>
        <position position="127"/>
    </location>
    <ligand>
        <name>substrate</name>
    </ligand>
</feature>
<feature type="binding site" evidence="1">
    <location>
        <position position="131"/>
    </location>
    <ligand>
        <name>substrate</name>
    </ligand>
</feature>
<feature type="binding site" evidence="1">
    <location>
        <begin position="140"/>
        <end position="141"/>
    </location>
    <ligand>
        <name>FMN</name>
        <dbReference type="ChEBI" id="CHEBI:58210"/>
    </ligand>
</feature>
<feature type="binding site" evidence="1">
    <location>
        <position position="184"/>
    </location>
    <ligand>
        <name>FMN</name>
        <dbReference type="ChEBI" id="CHEBI:58210"/>
    </ligand>
</feature>
<feature type="binding site" evidence="1">
    <location>
        <begin position="190"/>
        <end position="192"/>
    </location>
    <ligand>
        <name>substrate</name>
    </ligand>
</feature>
<feature type="binding site" evidence="1">
    <location>
        <position position="194"/>
    </location>
    <ligand>
        <name>FMN</name>
        <dbReference type="ChEBI" id="CHEBI:58210"/>
    </ligand>
</feature>
<keyword id="KW-0285">Flavoprotein</keyword>
<keyword id="KW-0288">FMN</keyword>
<keyword id="KW-0560">Oxidoreductase</keyword>
<keyword id="KW-0664">Pyridoxine biosynthesis</keyword>
<keyword id="KW-1185">Reference proteome</keyword>
<proteinExistence type="inferred from homology"/>
<protein>
    <recommendedName>
        <fullName evidence="1">Pyridoxine/pyridoxamine 5'-phosphate oxidase 1</fullName>
        <ecNumber evidence="1">1.4.3.5</ecNumber>
    </recommendedName>
    <alternativeName>
        <fullName evidence="1">PNP/PMP oxidase 1</fullName>
        <shortName evidence="1">PNPOx 1</shortName>
    </alternativeName>
    <alternativeName>
        <fullName evidence="1">Pyridoxal 5'-phosphate synthase 1</fullName>
    </alternativeName>
</protein>